<keyword id="KW-0963">Cytoplasm</keyword>
<keyword id="KW-0251">Elongation factor</keyword>
<keyword id="KW-0342">GTP-binding</keyword>
<keyword id="KW-0547">Nucleotide-binding</keyword>
<keyword id="KW-0597">Phosphoprotein</keyword>
<keyword id="KW-0648">Protein biosynthesis</keyword>
<keyword id="KW-1185">Reference proteome</keyword>
<feature type="chain" id="PRO_0000090904" description="Elongation factor 1-alpha">
    <location>
        <begin position="1"/>
        <end position="461"/>
    </location>
</feature>
<feature type="domain" description="tr-type G">
    <location>
        <begin position="5"/>
        <end position="242"/>
    </location>
</feature>
<feature type="region of interest" description="G1" evidence="1">
    <location>
        <begin position="14"/>
        <end position="21"/>
    </location>
</feature>
<feature type="region of interest" description="G2" evidence="1">
    <location>
        <begin position="70"/>
        <end position="74"/>
    </location>
</feature>
<feature type="region of interest" description="G3" evidence="1">
    <location>
        <begin position="91"/>
        <end position="94"/>
    </location>
</feature>
<feature type="region of interest" description="G4" evidence="1">
    <location>
        <begin position="153"/>
        <end position="156"/>
    </location>
</feature>
<feature type="region of interest" description="G5" evidence="1">
    <location>
        <begin position="194"/>
        <end position="196"/>
    </location>
</feature>
<feature type="binding site" evidence="1">
    <location>
        <begin position="14"/>
        <end position="21"/>
    </location>
    <ligand>
        <name>GTP</name>
        <dbReference type="ChEBI" id="CHEBI:37565"/>
    </ligand>
</feature>
<feature type="binding site" evidence="1">
    <location>
        <begin position="91"/>
        <end position="95"/>
    </location>
    <ligand>
        <name>GTP</name>
        <dbReference type="ChEBI" id="CHEBI:37565"/>
    </ligand>
</feature>
<feature type="binding site" evidence="1">
    <location>
        <begin position="153"/>
        <end position="156"/>
    </location>
    <ligand>
        <name>GTP</name>
        <dbReference type="ChEBI" id="CHEBI:37565"/>
    </ligand>
</feature>
<feature type="modified residue" description="5-glutamyl glycerylphosphorylethanolamine" evidence="1">
    <location>
        <position position="301"/>
    </location>
</feature>
<feature type="modified residue" description="5-glutamyl glycerylphosphorylethanolamine" evidence="1">
    <location>
        <position position="374"/>
    </location>
</feature>
<dbReference type="EMBL" id="X52884">
    <property type="protein sequence ID" value="CAA37066.1"/>
    <property type="molecule type" value="Genomic_DNA"/>
</dbReference>
<dbReference type="EMBL" id="X52885">
    <property type="protein sequence ID" value="CAA37066.1"/>
    <property type="status" value="JOINED"/>
    <property type="molecule type" value="Genomic_DNA"/>
</dbReference>
<dbReference type="PIR" id="S10738">
    <property type="entry name" value="EFHB1"/>
</dbReference>
<dbReference type="RefSeq" id="NP_001011628.1">
    <property type="nucleotide sequence ID" value="NM_001011628.2"/>
</dbReference>
<dbReference type="RefSeq" id="XP_006566906.1">
    <property type="nucleotide sequence ID" value="XM_006566843.3"/>
</dbReference>
<dbReference type="RefSeq" id="XP_006566907.1">
    <property type="nucleotide sequence ID" value="XM_006566844.3"/>
</dbReference>
<dbReference type="RefSeq" id="XP_006566908.1">
    <property type="nucleotide sequence ID" value="XM_006566845.2"/>
</dbReference>
<dbReference type="SMR" id="P19039"/>
<dbReference type="STRING" id="7460.P19039"/>
<dbReference type="PaxDb" id="7460-GB52028-PA"/>
<dbReference type="EnsemblMetazoa" id="NM_001011628">
    <property type="protein sequence ID" value="NP_001011628"/>
    <property type="gene ID" value="GeneID_408385"/>
</dbReference>
<dbReference type="EnsemblMetazoa" id="XM_006566843">
    <property type="protein sequence ID" value="XP_006566906"/>
    <property type="gene ID" value="GeneID_408385"/>
</dbReference>
<dbReference type="EnsemblMetazoa" id="XM_006566844">
    <property type="protein sequence ID" value="XP_006566907"/>
    <property type="gene ID" value="GeneID_408385"/>
</dbReference>
<dbReference type="GeneID" id="408385"/>
<dbReference type="KEGG" id="ame:408385"/>
<dbReference type="CTD" id="100114989"/>
<dbReference type="eggNOG" id="KOG0052">
    <property type="taxonomic scope" value="Eukaryota"/>
</dbReference>
<dbReference type="HOGENOM" id="CLU_007265_3_5_1"/>
<dbReference type="InParanoid" id="P19039"/>
<dbReference type="OMA" id="ECISFIA"/>
<dbReference type="OrthoDB" id="342024at2759"/>
<dbReference type="PhylomeDB" id="P19039"/>
<dbReference type="Proteomes" id="UP000005203">
    <property type="component" value="Linkage group LG12"/>
</dbReference>
<dbReference type="GO" id="GO:0005737">
    <property type="term" value="C:cytoplasm"/>
    <property type="evidence" value="ECO:0007669"/>
    <property type="project" value="UniProtKB-SubCell"/>
</dbReference>
<dbReference type="GO" id="GO:0005525">
    <property type="term" value="F:GTP binding"/>
    <property type="evidence" value="ECO:0007669"/>
    <property type="project" value="UniProtKB-KW"/>
</dbReference>
<dbReference type="GO" id="GO:0003924">
    <property type="term" value="F:GTPase activity"/>
    <property type="evidence" value="ECO:0007669"/>
    <property type="project" value="InterPro"/>
</dbReference>
<dbReference type="GO" id="GO:0003746">
    <property type="term" value="F:translation elongation factor activity"/>
    <property type="evidence" value="ECO:0007669"/>
    <property type="project" value="UniProtKB-KW"/>
</dbReference>
<dbReference type="CDD" id="cd01883">
    <property type="entry name" value="EF1_alpha"/>
    <property type="match status" value="1"/>
</dbReference>
<dbReference type="CDD" id="cd03693">
    <property type="entry name" value="EF1_alpha_II"/>
    <property type="match status" value="1"/>
</dbReference>
<dbReference type="CDD" id="cd03705">
    <property type="entry name" value="EF1_alpha_III"/>
    <property type="match status" value="1"/>
</dbReference>
<dbReference type="FunFam" id="2.40.30.10:FF:000003">
    <property type="entry name" value="Elongation factor 1-alpha"/>
    <property type="match status" value="1"/>
</dbReference>
<dbReference type="FunFam" id="2.40.30.10:FF:000005">
    <property type="entry name" value="Elongation factor 1-alpha"/>
    <property type="match status" value="1"/>
</dbReference>
<dbReference type="FunFam" id="3.40.50.300:FF:000090">
    <property type="entry name" value="Elongation factor 1-alpha"/>
    <property type="match status" value="1"/>
</dbReference>
<dbReference type="Gene3D" id="3.40.50.300">
    <property type="entry name" value="P-loop containing nucleotide triphosphate hydrolases"/>
    <property type="match status" value="1"/>
</dbReference>
<dbReference type="Gene3D" id="2.40.30.10">
    <property type="entry name" value="Translation factors"/>
    <property type="match status" value="2"/>
</dbReference>
<dbReference type="HAMAP" id="MF_00118_A">
    <property type="entry name" value="EF_Tu_A"/>
    <property type="match status" value="1"/>
</dbReference>
<dbReference type="InterPro" id="IPR004161">
    <property type="entry name" value="EFTu-like_2"/>
</dbReference>
<dbReference type="InterPro" id="IPR031157">
    <property type="entry name" value="G_TR_CS"/>
</dbReference>
<dbReference type="InterPro" id="IPR054696">
    <property type="entry name" value="GTP-eEF1A_C"/>
</dbReference>
<dbReference type="InterPro" id="IPR027417">
    <property type="entry name" value="P-loop_NTPase"/>
</dbReference>
<dbReference type="InterPro" id="IPR000795">
    <property type="entry name" value="T_Tr_GTP-bd_dom"/>
</dbReference>
<dbReference type="InterPro" id="IPR050100">
    <property type="entry name" value="TRAFAC_GTPase_members"/>
</dbReference>
<dbReference type="InterPro" id="IPR009000">
    <property type="entry name" value="Transl_B-barrel_sf"/>
</dbReference>
<dbReference type="InterPro" id="IPR009001">
    <property type="entry name" value="Transl_elong_EF1A/Init_IF2_C"/>
</dbReference>
<dbReference type="InterPro" id="IPR004539">
    <property type="entry name" value="Transl_elong_EF1A_euk/arc"/>
</dbReference>
<dbReference type="NCBIfam" id="TIGR00483">
    <property type="entry name" value="EF-1_alpha"/>
    <property type="match status" value="1"/>
</dbReference>
<dbReference type="NCBIfam" id="NF008969">
    <property type="entry name" value="PRK12317.1"/>
    <property type="match status" value="1"/>
</dbReference>
<dbReference type="PANTHER" id="PTHR23115">
    <property type="entry name" value="TRANSLATION FACTOR"/>
    <property type="match status" value="1"/>
</dbReference>
<dbReference type="Pfam" id="PF22594">
    <property type="entry name" value="GTP-eEF1A_C"/>
    <property type="match status" value="1"/>
</dbReference>
<dbReference type="Pfam" id="PF00009">
    <property type="entry name" value="GTP_EFTU"/>
    <property type="match status" value="1"/>
</dbReference>
<dbReference type="Pfam" id="PF03144">
    <property type="entry name" value="GTP_EFTU_D2"/>
    <property type="match status" value="1"/>
</dbReference>
<dbReference type="PRINTS" id="PR00315">
    <property type="entry name" value="ELONGATNFCT"/>
</dbReference>
<dbReference type="SUPFAM" id="SSF50465">
    <property type="entry name" value="EF-Tu/eEF-1alpha/eIF2-gamma C-terminal domain"/>
    <property type="match status" value="1"/>
</dbReference>
<dbReference type="SUPFAM" id="SSF52540">
    <property type="entry name" value="P-loop containing nucleoside triphosphate hydrolases"/>
    <property type="match status" value="1"/>
</dbReference>
<dbReference type="SUPFAM" id="SSF50447">
    <property type="entry name" value="Translation proteins"/>
    <property type="match status" value="1"/>
</dbReference>
<dbReference type="PROSITE" id="PS00301">
    <property type="entry name" value="G_TR_1"/>
    <property type="match status" value="1"/>
</dbReference>
<dbReference type="PROSITE" id="PS51722">
    <property type="entry name" value="G_TR_2"/>
    <property type="match status" value="1"/>
</dbReference>
<name>EF1A_APIME</name>
<reference key="1">
    <citation type="journal article" date="1990" name="FEBS Lett.">
        <title>Apis mellifera cytoplasmic elongation factor 1 alpha (EF-1 alpha) is closely related to Drosophila melanogaster EF-1 alpha.</title>
        <authorList>
            <person name="Walldorf U."/>
            <person name="Hovemann B.T."/>
        </authorList>
    </citation>
    <scope>NUCLEOTIDE SEQUENCE [GENOMIC DNA]</scope>
</reference>
<accession>P19039</accession>
<protein>
    <recommendedName>
        <fullName>Elongation factor 1-alpha</fullName>
        <shortName>EF-1-alpha</shortName>
    </recommendedName>
</protein>
<sequence length="461" mass="50521">MGKEKIHINIVVIGHVDSGKSTTTGHLIYKCGGIDKRTIEKFEKEAQEMGKGSFKYAWVLDKLKAERERGITIDIALWKFETAKYYVTIIDAPGHRDFIKNMITGTSQADCAVLIVAAGIGEFEAGISKNGQTREHALLAFTLGVKQLIVGVNKMDMTDPPYSEARFEEIKKEVSSYIKKIGYNTASVAFVPISGWHGDNMLEPSPKTPWYKGWKVERKDGNADGKTLIEALDAILPPSRPTDKALRLPLQDVYKIGGIGTVPVGRVETGILKPGMLVTFAPAALTTEVKSVEMHHEALTEALPGDNVGFNVKNISVKELRRGYVAGDSKNQPPRGAADFTAQVIVLNHPGQISNGYTPVLDCHTAHIACKFAEIKEKCDRRTGKTTEENPKSIKSGDAAIVMLQPTKPMCVEAFQEFPPLGRFAVRDMRQTVAVGVIKSVTFKDTQGKVTKAAEKAQKKK</sequence>
<evidence type="ECO:0000250" key="1"/>
<evidence type="ECO:0000305" key="2"/>
<proteinExistence type="inferred from homology"/>
<comment type="function">
    <text>This protein promotes the GTP-dependent binding of aminoacyl-tRNA to the A-site of ribosomes during protein biosynthesis.</text>
</comment>
<comment type="subcellular location">
    <subcellularLocation>
        <location>Cytoplasm</location>
    </subcellularLocation>
</comment>
<comment type="similarity">
    <text evidence="2">Belongs to the TRAFAC class translation factor GTPase superfamily. Classic translation factor GTPase family. EF-Tu/EF-1A subfamily.</text>
</comment>
<organism>
    <name type="scientific">Apis mellifera</name>
    <name type="common">Honeybee</name>
    <dbReference type="NCBI Taxonomy" id="7460"/>
    <lineage>
        <taxon>Eukaryota</taxon>
        <taxon>Metazoa</taxon>
        <taxon>Ecdysozoa</taxon>
        <taxon>Arthropoda</taxon>
        <taxon>Hexapoda</taxon>
        <taxon>Insecta</taxon>
        <taxon>Pterygota</taxon>
        <taxon>Neoptera</taxon>
        <taxon>Endopterygota</taxon>
        <taxon>Hymenoptera</taxon>
        <taxon>Apocrita</taxon>
        <taxon>Aculeata</taxon>
        <taxon>Apoidea</taxon>
        <taxon>Anthophila</taxon>
        <taxon>Apidae</taxon>
        <taxon>Apis</taxon>
    </lineage>
</organism>